<gene>
    <name evidence="1" type="primary">pheT</name>
    <name type="ordered locus">BAB1_2127</name>
</gene>
<comment type="catalytic activity">
    <reaction evidence="1">
        <text>tRNA(Phe) + L-phenylalanine + ATP = L-phenylalanyl-tRNA(Phe) + AMP + diphosphate + H(+)</text>
        <dbReference type="Rhea" id="RHEA:19413"/>
        <dbReference type="Rhea" id="RHEA-COMP:9668"/>
        <dbReference type="Rhea" id="RHEA-COMP:9699"/>
        <dbReference type="ChEBI" id="CHEBI:15378"/>
        <dbReference type="ChEBI" id="CHEBI:30616"/>
        <dbReference type="ChEBI" id="CHEBI:33019"/>
        <dbReference type="ChEBI" id="CHEBI:58095"/>
        <dbReference type="ChEBI" id="CHEBI:78442"/>
        <dbReference type="ChEBI" id="CHEBI:78531"/>
        <dbReference type="ChEBI" id="CHEBI:456215"/>
        <dbReference type="EC" id="6.1.1.20"/>
    </reaction>
</comment>
<comment type="cofactor">
    <cofactor evidence="1">
        <name>Mg(2+)</name>
        <dbReference type="ChEBI" id="CHEBI:18420"/>
    </cofactor>
    <text evidence="1">Binds 2 magnesium ions per tetramer.</text>
</comment>
<comment type="subunit">
    <text evidence="1">Tetramer of two alpha and two beta subunits.</text>
</comment>
<comment type="subcellular location">
    <subcellularLocation>
        <location evidence="1">Cytoplasm</location>
    </subcellularLocation>
</comment>
<comment type="similarity">
    <text evidence="1">Belongs to the phenylalanyl-tRNA synthetase beta subunit family. Type 1 subfamily.</text>
</comment>
<organism>
    <name type="scientific">Brucella abortus (strain 2308)</name>
    <dbReference type="NCBI Taxonomy" id="359391"/>
    <lineage>
        <taxon>Bacteria</taxon>
        <taxon>Pseudomonadati</taxon>
        <taxon>Pseudomonadota</taxon>
        <taxon>Alphaproteobacteria</taxon>
        <taxon>Hyphomicrobiales</taxon>
        <taxon>Brucellaceae</taxon>
        <taxon>Brucella/Ochrobactrum group</taxon>
        <taxon>Brucella</taxon>
    </lineage>
</organism>
<dbReference type="EC" id="6.1.1.20" evidence="1"/>
<dbReference type="EMBL" id="AM040264">
    <property type="protein sequence ID" value="CAJ12083.1"/>
    <property type="molecule type" value="Genomic_DNA"/>
</dbReference>
<dbReference type="RefSeq" id="WP_002965188.1">
    <property type="nucleotide sequence ID" value="NZ_KN046823.1"/>
</dbReference>
<dbReference type="SMR" id="Q2YQV4"/>
<dbReference type="STRING" id="359391.BAB1_2127"/>
<dbReference type="GeneID" id="93017570"/>
<dbReference type="KEGG" id="bmf:BAB1_2127"/>
<dbReference type="PATRIC" id="fig|359391.11.peg.1359"/>
<dbReference type="HOGENOM" id="CLU_016891_0_0_5"/>
<dbReference type="PhylomeDB" id="Q2YQV4"/>
<dbReference type="Proteomes" id="UP000002719">
    <property type="component" value="Chromosome I"/>
</dbReference>
<dbReference type="GO" id="GO:0009328">
    <property type="term" value="C:phenylalanine-tRNA ligase complex"/>
    <property type="evidence" value="ECO:0007669"/>
    <property type="project" value="TreeGrafter"/>
</dbReference>
<dbReference type="GO" id="GO:0005524">
    <property type="term" value="F:ATP binding"/>
    <property type="evidence" value="ECO:0007669"/>
    <property type="project" value="UniProtKB-UniRule"/>
</dbReference>
<dbReference type="GO" id="GO:0000287">
    <property type="term" value="F:magnesium ion binding"/>
    <property type="evidence" value="ECO:0007669"/>
    <property type="project" value="UniProtKB-UniRule"/>
</dbReference>
<dbReference type="GO" id="GO:0004826">
    <property type="term" value="F:phenylalanine-tRNA ligase activity"/>
    <property type="evidence" value="ECO:0007669"/>
    <property type="project" value="UniProtKB-UniRule"/>
</dbReference>
<dbReference type="GO" id="GO:0000049">
    <property type="term" value="F:tRNA binding"/>
    <property type="evidence" value="ECO:0007669"/>
    <property type="project" value="UniProtKB-KW"/>
</dbReference>
<dbReference type="GO" id="GO:0006432">
    <property type="term" value="P:phenylalanyl-tRNA aminoacylation"/>
    <property type="evidence" value="ECO:0007669"/>
    <property type="project" value="UniProtKB-UniRule"/>
</dbReference>
<dbReference type="CDD" id="cd00769">
    <property type="entry name" value="PheRS_beta_core"/>
    <property type="match status" value="1"/>
</dbReference>
<dbReference type="CDD" id="cd02796">
    <property type="entry name" value="tRNA_bind_bactPheRS"/>
    <property type="match status" value="1"/>
</dbReference>
<dbReference type="FunFam" id="2.40.50.140:FF:000045">
    <property type="entry name" value="Phenylalanine--tRNA ligase beta subunit"/>
    <property type="match status" value="1"/>
</dbReference>
<dbReference type="FunFam" id="3.30.70.380:FF:000001">
    <property type="entry name" value="Phenylalanine--tRNA ligase beta subunit"/>
    <property type="match status" value="1"/>
</dbReference>
<dbReference type="Gene3D" id="3.30.56.10">
    <property type="match status" value="2"/>
</dbReference>
<dbReference type="Gene3D" id="3.30.930.10">
    <property type="entry name" value="Bira Bifunctional Protein, Domain 2"/>
    <property type="match status" value="1"/>
</dbReference>
<dbReference type="Gene3D" id="3.30.70.380">
    <property type="entry name" value="Ferrodoxin-fold anticodon-binding domain"/>
    <property type="match status" value="1"/>
</dbReference>
<dbReference type="Gene3D" id="2.40.50.140">
    <property type="entry name" value="Nucleic acid-binding proteins"/>
    <property type="match status" value="1"/>
</dbReference>
<dbReference type="Gene3D" id="3.50.40.10">
    <property type="entry name" value="Phenylalanyl-trna Synthetase, Chain B, domain 3"/>
    <property type="match status" value="1"/>
</dbReference>
<dbReference type="HAMAP" id="MF_00283">
    <property type="entry name" value="Phe_tRNA_synth_beta1"/>
    <property type="match status" value="1"/>
</dbReference>
<dbReference type="InterPro" id="IPR045864">
    <property type="entry name" value="aa-tRNA-synth_II/BPL/LPL"/>
</dbReference>
<dbReference type="InterPro" id="IPR005146">
    <property type="entry name" value="B3/B4_tRNA-bd"/>
</dbReference>
<dbReference type="InterPro" id="IPR009061">
    <property type="entry name" value="DNA-bd_dom_put_sf"/>
</dbReference>
<dbReference type="InterPro" id="IPR005121">
    <property type="entry name" value="Fdx_antiC-bd"/>
</dbReference>
<dbReference type="InterPro" id="IPR036690">
    <property type="entry name" value="Fdx_antiC-bd_sf"/>
</dbReference>
<dbReference type="InterPro" id="IPR012340">
    <property type="entry name" value="NA-bd_OB-fold"/>
</dbReference>
<dbReference type="InterPro" id="IPR045060">
    <property type="entry name" value="Phe-tRNA-ligase_IIc_bsu"/>
</dbReference>
<dbReference type="InterPro" id="IPR004532">
    <property type="entry name" value="Phe-tRNA-ligase_IIc_bsu_bact"/>
</dbReference>
<dbReference type="InterPro" id="IPR020825">
    <property type="entry name" value="Phe-tRNA_synthase-like_B3/B4"/>
</dbReference>
<dbReference type="InterPro" id="IPR041616">
    <property type="entry name" value="PheRS_beta_core"/>
</dbReference>
<dbReference type="InterPro" id="IPR002547">
    <property type="entry name" value="tRNA-bd_dom"/>
</dbReference>
<dbReference type="InterPro" id="IPR033714">
    <property type="entry name" value="tRNA_bind_bactPheRS"/>
</dbReference>
<dbReference type="InterPro" id="IPR005147">
    <property type="entry name" value="tRNA_synthase_B5-dom"/>
</dbReference>
<dbReference type="NCBIfam" id="TIGR00472">
    <property type="entry name" value="pheT_bact"/>
    <property type="match status" value="1"/>
</dbReference>
<dbReference type="NCBIfam" id="NF045760">
    <property type="entry name" value="YtpR"/>
    <property type="match status" value="1"/>
</dbReference>
<dbReference type="PANTHER" id="PTHR10947:SF0">
    <property type="entry name" value="PHENYLALANINE--TRNA LIGASE BETA SUBUNIT"/>
    <property type="match status" value="1"/>
</dbReference>
<dbReference type="PANTHER" id="PTHR10947">
    <property type="entry name" value="PHENYLALANYL-TRNA SYNTHETASE BETA CHAIN AND LEUCINE-RICH REPEAT-CONTAINING PROTEIN 47"/>
    <property type="match status" value="1"/>
</dbReference>
<dbReference type="Pfam" id="PF03483">
    <property type="entry name" value="B3_4"/>
    <property type="match status" value="1"/>
</dbReference>
<dbReference type="Pfam" id="PF03484">
    <property type="entry name" value="B5"/>
    <property type="match status" value="1"/>
</dbReference>
<dbReference type="Pfam" id="PF03147">
    <property type="entry name" value="FDX-ACB"/>
    <property type="match status" value="1"/>
</dbReference>
<dbReference type="Pfam" id="PF01588">
    <property type="entry name" value="tRNA_bind"/>
    <property type="match status" value="1"/>
</dbReference>
<dbReference type="Pfam" id="PF17759">
    <property type="entry name" value="tRNA_synthFbeta"/>
    <property type="match status" value="1"/>
</dbReference>
<dbReference type="SMART" id="SM00873">
    <property type="entry name" value="B3_4"/>
    <property type="match status" value="1"/>
</dbReference>
<dbReference type="SMART" id="SM00874">
    <property type="entry name" value="B5"/>
    <property type="match status" value="1"/>
</dbReference>
<dbReference type="SMART" id="SM00896">
    <property type="entry name" value="FDX-ACB"/>
    <property type="match status" value="1"/>
</dbReference>
<dbReference type="SUPFAM" id="SSF54991">
    <property type="entry name" value="Anticodon-binding domain of PheRS"/>
    <property type="match status" value="1"/>
</dbReference>
<dbReference type="SUPFAM" id="SSF55681">
    <property type="entry name" value="Class II aaRS and biotin synthetases"/>
    <property type="match status" value="1"/>
</dbReference>
<dbReference type="SUPFAM" id="SSF50249">
    <property type="entry name" value="Nucleic acid-binding proteins"/>
    <property type="match status" value="1"/>
</dbReference>
<dbReference type="SUPFAM" id="SSF56037">
    <property type="entry name" value="PheT/TilS domain"/>
    <property type="match status" value="1"/>
</dbReference>
<dbReference type="SUPFAM" id="SSF46955">
    <property type="entry name" value="Putative DNA-binding domain"/>
    <property type="match status" value="1"/>
</dbReference>
<dbReference type="PROSITE" id="PS51483">
    <property type="entry name" value="B5"/>
    <property type="match status" value="1"/>
</dbReference>
<dbReference type="PROSITE" id="PS51447">
    <property type="entry name" value="FDX_ACB"/>
    <property type="match status" value="1"/>
</dbReference>
<dbReference type="PROSITE" id="PS50886">
    <property type="entry name" value="TRBD"/>
    <property type="match status" value="1"/>
</dbReference>
<reference key="1">
    <citation type="journal article" date="2005" name="Infect. Immun.">
        <title>Whole-genome analyses of speciation events in pathogenic Brucellae.</title>
        <authorList>
            <person name="Chain P.S."/>
            <person name="Comerci D.J."/>
            <person name="Tolmasky M.E."/>
            <person name="Larimer F.W."/>
            <person name="Malfatti S.A."/>
            <person name="Vergez L.M."/>
            <person name="Aguero F."/>
            <person name="Land M.L."/>
            <person name="Ugalde R.A."/>
            <person name="Garcia E."/>
        </authorList>
    </citation>
    <scope>NUCLEOTIDE SEQUENCE [LARGE SCALE GENOMIC DNA]</scope>
    <source>
        <strain>2308</strain>
    </source>
</reference>
<evidence type="ECO:0000255" key="1">
    <source>
        <dbReference type="HAMAP-Rule" id="MF_00283"/>
    </source>
</evidence>
<feature type="chain" id="PRO_0000232048" description="Phenylalanine--tRNA ligase beta subunit">
    <location>
        <begin position="1"/>
        <end position="804"/>
    </location>
</feature>
<feature type="domain" description="tRNA-binding" evidence="1">
    <location>
        <begin position="38"/>
        <end position="148"/>
    </location>
</feature>
<feature type="domain" description="B5" evidence="1">
    <location>
        <begin position="401"/>
        <end position="476"/>
    </location>
</feature>
<feature type="domain" description="FDX-ACB" evidence="1">
    <location>
        <begin position="710"/>
        <end position="803"/>
    </location>
</feature>
<feature type="binding site" evidence="1">
    <location>
        <position position="454"/>
    </location>
    <ligand>
        <name>Mg(2+)</name>
        <dbReference type="ChEBI" id="CHEBI:18420"/>
        <note>shared with alpha subunit</note>
    </ligand>
</feature>
<feature type="binding site" evidence="1">
    <location>
        <position position="460"/>
    </location>
    <ligand>
        <name>Mg(2+)</name>
        <dbReference type="ChEBI" id="CHEBI:18420"/>
        <note>shared with alpha subunit</note>
    </ligand>
</feature>
<feature type="binding site" evidence="1">
    <location>
        <position position="463"/>
    </location>
    <ligand>
        <name>Mg(2+)</name>
        <dbReference type="ChEBI" id="CHEBI:18420"/>
        <note>shared with alpha subunit</note>
    </ligand>
</feature>
<feature type="binding site" evidence="1">
    <location>
        <position position="464"/>
    </location>
    <ligand>
        <name>Mg(2+)</name>
        <dbReference type="ChEBI" id="CHEBI:18420"/>
        <note>shared with alpha subunit</note>
    </ligand>
</feature>
<proteinExistence type="inferred from homology"/>
<protein>
    <recommendedName>
        <fullName evidence="1">Phenylalanine--tRNA ligase beta subunit</fullName>
        <ecNumber evidence="1">6.1.1.20</ecNumber>
    </recommendedName>
    <alternativeName>
        <fullName evidence="1">Phenylalanyl-tRNA synthetase beta subunit</fullName>
        <shortName evidence="1">PheRS</shortName>
    </alternativeName>
</protein>
<keyword id="KW-0030">Aminoacyl-tRNA synthetase</keyword>
<keyword id="KW-0067">ATP-binding</keyword>
<keyword id="KW-0963">Cytoplasm</keyword>
<keyword id="KW-0436">Ligase</keyword>
<keyword id="KW-0460">Magnesium</keyword>
<keyword id="KW-0479">Metal-binding</keyword>
<keyword id="KW-0547">Nucleotide-binding</keyword>
<keyword id="KW-0648">Protein biosynthesis</keyword>
<keyword id="KW-1185">Reference proteome</keyword>
<keyword id="KW-0694">RNA-binding</keyword>
<keyword id="KW-0820">tRNA-binding</keyword>
<name>SYFB_BRUA2</name>
<accession>Q2YQV4</accession>
<sequence>MKFTLSWLKDHLETDATLDEIVEKLTDIGLEVESVDDRAAFRAFTIARVLTATRHPDADKLQVLSVDTGDGKPVQVVCGAPNARAGLVGVLGRPGDYVPGLDVTLSVGKIRGVESFGMMCSERELELSDEHNGIIDLAENAPVGTSFAAYMGLDDPIIEIGLTPNRADCTGIRGIARDLAAAGLGTLKNTLPDAVKGEGETPVKVILDQDAGNPFCTGFALRMVKGVKNGPSPKWMQQRLKAIGLRPINALVDITNYVTFDQGRPLHVFDAAKVKGNLTVRTARDGETILALDQREYKLNAGMYVIADENGPESIAGIMGGEHSGCDENTVDVLIESALWDPRMIASTGRELGIVTDARYRFERGVDPEMMVPGAEIATKLVLELCGGQPTVLDVVGYKPHTARVIDFPVTEVKRLTGLDVSYEDAFDILKRLGFGVEGDGKTIRATVPSWRGDVEGKADLVEEVMRIHGINRIDPQPLPSHGAVNGRILTTLQIRTRHARRMLASRGMMEAVTYSFISEAQAKAFGGGKPELKLANPIAADMSDMRPSLLPGLLAAAQRNADRGFDDIALFEVSGIYEGDTPDKQRRVAGGVRRGTAKVEGAGRFWAGNAAPVGVFDAKADALAALEAAGAPVDRIQIEAGGPEWLHPGRSGTLKLGPKVVLGTFGEFHPDTLEALDVSGALCGFEVYLDAIPEPKAKSARTKPALSLSLFQSLKRDYAFVVDAAVEAGNVVKAVSSADKKLIVGVQVFDIFTGASLGEGKKSIAVEVLLQPQDRTLTDEDLEALSKQIVASVAKQTGGVLRG</sequence>